<name>YHHM_ECOLI</name>
<feature type="chain" id="PRO_0000169555" description="Uncharacterized protein YhhM">
    <location>
        <begin position="1"/>
        <end position="119"/>
    </location>
</feature>
<keyword id="KW-1185">Reference proteome</keyword>
<accession>P37615</accession>
<accession>Q2M7D0</accession>
<proteinExistence type="predicted"/>
<sequence>MSKPPLFFIVIIGLIVVAASFRFMQQRREKADNDMAPLQQKLVVVSNKREKPINDRRSRQQEVTPAGTSIRYEASFKPQSGGMEQTFRLDAQQYHALTVGDKGTLSYKGTRFVSFVGEQ</sequence>
<protein>
    <recommendedName>
        <fullName>Uncharacterized protein YhhM</fullName>
    </recommendedName>
</protein>
<organism>
    <name type="scientific">Escherichia coli (strain K12)</name>
    <dbReference type="NCBI Taxonomy" id="83333"/>
    <lineage>
        <taxon>Bacteria</taxon>
        <taxon>Pseudomonadati</taxon>
        <taxon>Pseudomonadota</taxon>
        <taxon>Gammaproteobacteria</taxon>
        <taxon>Enterobacterales</taxon>
        <taxon>Enterobacteriaceae</taxon>
        <taxon>Escherichia</taxon>
    </lineage>
</organism>
<reference key="1">
    <citation type="journal article" date="1994" name="Nucleic Acids Res.">
        <title>Analysis of the Escherichia coli genome. V. DNA sequence of the region from 76.0 to 81.5 minutes.</title>
        <authorList>
            <person name="Sofia H.J."/>
            <person name="Burland V."/>
            <person name="Daniels D.L."/>
            <person name="Plunkett G. III"/>
            <person name="Blattner F.R."/>
        </authorList>
    </citation>
    <scope>NUCLEOTIDE SEQUENCE [LARGE SCALE GENOMIC DNA]</scope>
    <source>
        <strain>K12 / MG1655 / ATCC 47076</strain>
    </source>
</reference>
<reference key="2">
    <citation type="journal article" date="1997" name="Science">
        <title>The complete genome sequence of Escherichia coli K-12.</title>
        <authorList>
            <person name="Blattner F.R."/>
            <person name="Plunkett G. III"/>
            <person name="Bloch C.A."/>
            <person name="Perna N.T."/>
            <person name="Burland V."/>
            <person name="Riley M."/>
            <person name="Collado-Vides J."/>
            <person name="Glasner J.D."/>
            <person name="Rode C.K."/>
            <person name="Mayhew G.F."/>
            <person name="Gregor J."/>
            <person name="Davis N.W."/>
            <person name="Kirkpatrick H.A."/>
            <person name="Goeden M.A."/>
            <person name="Rose D.J."/>
            <person name="Mau B."/>
            <person name="Shao Y."/>
        </authorList>
    </citation>
    <scope>NUCLEOTIDE SEQUENCE [LARGE SCALE GENOMIC DNA]</scope>
    <source>
        <strain>K12 / MG1655 / ATCC 47076</strain>
    </source>
</reference>
<reference key="3">
    <citation type="journal article" date="2006" name="Mol. Syst. Biol.">
        <title>Highly accurate genome sequences of Escherichia coli K-12 strains MG1655 and W3110.</title>
        <authorList>
            <person name="Hayashi K."/>
            <person name="Morooka N."/>
            <person name="Yamamoto Y."/>
            <person name="Fujita K."/>
            <person name="Isono K."/>
            <person name="Choi S."/>
            <person name="Ohtsubo E."/>
            <person name="Baba T."/>
            <person name="Wanner B.L."/>
            <person name="Mori H."/>
            <person name="Horiuchi T."/>
        </authorList>
    </citation>
    <scope>NUCLEOTIDE SEQUENCE [LARGE SCALE GENOMIC DNA]</scope>
    <source>
        <strain>K12 / W3110 / ATCC 27325 / DSM 5911</strain>
    </source>
</reference>
<dbReference type="EMBL" id="U00039">
    <property type="protein sequence ID" value="AAB18442.1"/>
    <property type="molecule type" value="Genomic_DNA"/>
</dbReference>
<dbReference type="EMBL" id="U00096">
    <property type="protein sequence ID" value="AAC76492.1"/>
    <property type="molecule type" value="Genomic_DNA"/>
</dbReference>
<dbReference type="EMBL" id="AP009048">
    <property type="protein sequence ID" value="BAE77826.1"/>
    <property type="molecule type" value="Genomic_DNA"/>
</dbReference>
<dbReference type="PIR" id="S47686">
    <property type="entry name" value="S47686"/>
</dbReference>
<dbReference type="RefSeq" id="NP_417924.1">
    <property type="nucleotide sequence ID" value="NC_000913.3"/>
</dbReference>
<dbReference type="RefSeq" id="WP_000042895.1">
    <property type="nucleotide sequence ID" value="NZ_SSZK01000008.1"/>
</dbReference>
<dbReference type="SMR" id="P37615"/>
<dbReference type="BioGRID" id="4262919">
    <property type="interactions" value="13"/>
</dbReference>
<dbReference type="FunCoup" id="P37615">
    <property type="interactions" value="58"/>
</dbReference>
<dbReference type="IntAct" id="P37615">
    <property type="interactions" value="1"/>
</dbReference>
<dbReference type="STRING" id="511145.b3467"/>
<dbReference type="PaxDb" id="511145-b3467"/>
<dbReference type="EnsemblBacteria" id="AAC76492">
    <property type="protein sequence ID" value="AAC76492"/>
    <property type="gene ID" value="b3467"/>
</dbReference>
<dbReference type="GeneID" id="947975"/>
<dbReference type="KEGG" id="ecj:JW3432"/>
<dbReference type="KEGG" id="eco:b3467"/>
<dbReference type="KEGG" id="ecoc:C3026_18780"/>
<dbReference type="PATRIC" id="fig|511145.12.peg.3566"/>
<dbReference type="EchoBASE" id="EB2127"/>
<dbReference type="eggNOG" id="ENOG50318D9">
    <property type="taxonomic scope" value="Bacteria"/>
</dbReference>
<dbReference type="HOGENOM" id="CLU_160683_0_0_6"/>
<dbReference type="InParanoid" id="P37615"/>
<dbReference type="OMA" id="DYHQMDK"/>
<dbReference type="OrthoDB" id="5917531at2"/>
<dbReference type="PhylomeDB" id="P37615"/>
<dbReference type="BioCyc" id="EcoCyc:EG12213-MONOMER"/>
<dbReference type="PRO" id="PR:P37615"/>
<dbReference type="Proteomes" id="UP000000625">
    <property type="component" value="Chromosome"/>
</dbReference>
<dbReference type="Gene3D" id="2.40.50.660">
    <property type="match status" value="1"/>
</dbReference>
<dbReference type="InterPro" id="IPR019635">
    <property type="entry name" value="DUF2500"/>
</dbReference>
<dbReference type="Pfam" id="PF10694">
    <property type="entry name" value="DUF2500"/>
    <property type="match status" value="1"/>
</dbReference>
<gene>
    <name type="primary">yhhM</name>
    <name type="ordered locus">b3467</name>
    <name type="ordered locus">JW3432</name>
</gene>